<proteinExistence type="inferred from homology"/>
<comment type="function">
    <text evidence="1">This protein binds specifically to 23S rRNA.</text>
</comment>
<comment type="function">
    <text evidence="1">The globular domain of the protein is located near the polypeptide exit tunnel on the outside of the subunit, while an extended beta-hairpin is found that lines the wall of the exit tunnel in the center of the 70S ribosome.</text>
</comment>
<comment type="subunit">
    <text evidence="1">Part of the 50S ribosomal subunit.</text>
</comment>
<comment type="subcellular location">
    <subcellularLocation>
        <location>Plastid</location>
        <location>Chloroplast</location>
    </subcellularLocation>
</comment>
<comment type="similarity">
    <text evidence="2">Belongs to the universal ribosomal protein uL22 family.</text>
</comment>
<protein>
    <recommendedName>
        <fullName evidence="2">Large ribosomal subunit protein uL22c</fullName>
    </recommendedName>
    <alternativeName>
        <fullName>50S ribosomal protein L22, chloroplastic</fullName>
    </alternativeName>
</protein>
<feature type="chain" id="PRO_0000276445" description="Large ribosomal subunit protein uL22c">
    <location>
        <begin position="1"/>
        <end position="151"/>
    </location>
</feature>
<keyword id="KW-0150">Chloroplast</keyword>
<keyword id="KW-0934">Plastid</keyword>
<keyword id="KW-0687">Ribonucleoprotein</keyword>
<keyword id="KW-0689">Ribosomal protein</keyword>
<keyword id="KW-0694">RNA-binding</keyword>
<keyword id="KW-0699">rRNA-binding</keyword>
<reference key="1">
    <citation type="journal article" date="2006" name="Genes Genet. Syst.">
        <title>Complete nucleotide sequence of the cotton (Gossypium barbadense L.) chloroplast genome with a comparative analysis of sequences among 9 dicot plants.</title>
        <authorList>
            <person name="Ibrahim R.I.H."/>
            <person name="Azuma J."/>
            <person name="Sakamoto M."/>
        </authorList>
    </citation>
    <scope>NUCLEOTIDE SEQUENCE [LARGE SCALE GENOMIC DNA]</scope>
</reference>
<gene>
    <name type="primary">rpl22</name>
</gene>
<name>RK22_GOSBA</name>
<accession>A0ZZ74</accession>
<organism>
    <name type="scientific">Gossypium barbadense</name>
    <name type="common">Sea Island cotton</name>
    <name type="synonym">Hibiscus barbadensis</name>
    <dbReference type="NCBI Taxonomy" id="3634"/>
    <lineage>
        <taxon>Eukaryota</taxon>
        <taxon>Viridiplantae</taxon>
        <taxon>Streptophyta</taxon>
        <taxon>Embryophyta</taxon>
        <taxon>Tracheophyta</taxon>
        <taxon>Spermatophyta</taxon>
        <taxon>Magnoliopsida</taxon>
        <taxon>eudicotyledons</taxon>
        <taxon>Gunneridae</taxon>
        <taxon>Pentapetalae</taxon>
        <taxon>rosids</taxon>
        <taxon>malvids</taxon>
        <taxon>Malvales</taxon>
        <taxon>Malvaceae</taxon>
        <taxon>Malvoideae</taxon>
        <taxon>Gossypium</taxon>
    </lineage>
</organism>
<evidence type="ECO:0000250" key="1"/>
<evidence type="ECO:0000305" key="2"/>
<dbReference type="EMBL" id="AP009123">
    <property type="protein sequence ID" value="BAF41286.1"/>
    <property type="molecule type" value="Genomic_DNA"/>
</dbReference>
<dbReference type="RefSeq" id="YP_913226.1">
    <property type="nucleotide sequence ID" value="NC_008641.1"/>
</dbReference>
<dbReference type="SMR" id="A0ZZ74"/>
<dbReference type="GeneID" id="4575238"/>
<dbReference type="GO" id="GO:0009507">
    <property type="term" value="C:chloroplast"/>
    <property type="evidence" value="ECO:0007669"/>
    <property type="project" value="UniProtKB-SubCell"/>
</dbReference>
<dbReference type="GO" id="GO:0015934">
    <property type="term" value="C:large ribosomal subunit"/>
    <property type="evidence" value="ECO:0007669"/>
    <property type="project" value="InterPro"/>
</dbReference>
<dbReference type="GO" id="GO:0019843">
    <property type="term" value="F:rRNA binding"/>
    <property type="evidence" value="ECO:0007669"/>
    <property type="project" value="UniProtKB-UniRule"/>
</dbReference>
<dbReference type="GO" id="GO:0003735">
    <property type="term" value="F:structural constituent of ribosome"/>
    <property type="evidence" value="ECO:0007669"/>
    <property type="project" value="InterPro"/>
</dbReference>
<dbReference type="GO" id="GO:0006412">
    <property type="term" value="P:translation"/>
    <property type="evidence" value="ECO:0007669"/>
    <property type="project" value="UniProtKB-UniRule"/>
</dbReference>
<dbReference type="CDD" id="cd00336">
    <property type="entry name" value="Ribosomal_L22"/>
    <property type="match status" value="1"/>
</dbReference>
<dbReference type="FunFam" id="3.90.470.10:FF:000006">
    <property type="entry name" value="50S ribosomal protein L22, chloroplastic"/>
    <property type="match status" value="1"/>
</dbReference>
<dbReference type="Gene3D" id="3.90.470.10">
    <property type="entry name" value="Ribosomal protein L22/L17"/>
    <property type="match status" value="1"/>
</dbReference>
<dbReference type="HAMAP" id="MF_01331_B">
    <property type="entry name" value="Ribosomal_uL22_B"/>
    <property type="match status" value="1"/>
</dbReference>
<dbReference type="InterPro" id="IPR001063">
    <property type="entry name" value="Ribosomal_uL22"/>
</dbReference>
<dbReference type="InterPro" id="IPR005727">
    <property type="entry name" value="Ribosomal_uL22_bac/chlpt-type"/>
</dbReference>
<dbReference type="InterPro" id="IPR047867">
    <property type="entry name" value="Ribosomal_uL22_bac/org-type"/>
</dbReference>
<dbReference type="InterPro" id="IPR018260">
    <property type="entry name" value="Ribosomal_uL22_CS"/>
</dbReference>
<dbReference type="InterPro" id="IPR036394">
    <property type="entry name" value="Ribosomal_uL22_sf"/>
</dbReference>
<dbReference type="NCBIfam" id="TIGR01044">
    <property type="entry name" value="rplV_bact"/>
    <property type="match status" value="1"/>
</dbReference>
<dbReference type="PANTHER" id="PTHR13501">
    <property type="entry name" value="CHLOROPLAST 50S RIBOSOMAL PROTEIN L22-RELATED"/>
    <property type="match status" value="1"/>
</dbReference>
<dbReference type="PANTHER" id="PTHR13501:SF10">
    <property type="entry name" value="LARGE RIBOSOMAL SUBUNIT PROTEIN UL22M"/>
    <property type="match status" value="1"/>
</dbReference>
<dbReference type="Pfam" id="PF00237">
    <property type="entry name" value="Ribosomal_L22"/>
    <property type="match status" value="1"/>
</dbReference>
<dbReference type="SUPFAM" id="SSF54843">
    <property type="entry name" value="Ribosomal protein L22"/>
    <property type="match status" value="1"/>
</dbReference>
<dbReference type="PROSITE" id="PS00464">
    <property type="entry name" value="RIBOSOMAL_L22"/>
    <property type="match status" value="1"/>
</dbReference>
<geneLocation type="chloroplast"/>
<sequence length="151" mass="17538">MIKIKKHRRNPYTTSDEVYALGQHICMSAHKARRIIDQIRGRSYEETLMILELMPYRACYPILKLVYSAAANARHNRGFNEASLIISQVAVNEGTTLKRLNPRARGRSYLIKRPTCHITIALKDLEFEPLDRYMLRPKPKNTGWLGWLKKG</sequence>